<dbReference type="EC" id="6.1.1.15" evidence="1"/>
<dbReference type="EMBL" id="CP000764">
    <property type="protein sequence ID" value="ABS22707.1"/>
    <property type="molecule type" value="Genomic_DNA"/>
</dbReference>
<dbReference type="RefSeq" id="WP_012094911.1">
    <property type="nucleotide sequence ID" value="NC_009674.1"/>
</dbReference>
<dbReference type="SMR" id="A7GRE9"/>
<dbReference type="STRING" id="315749.Bcer98_2471"/>
<dbReference type="GeneID" id="33897726"/>
<dbReference type="KEGG" id="bcy:Bcer98_2471"/>
<dbReference type="eggNOG" id="COG0442">
    <property type="taxonomic scope" value="Bacteria"/>
</dbReference>
<dbReference type="HOGENOM" id="CLU_016739_0_0_9"/>
<dbReference type="OrthoDB" id="9809052at2"/>
<dbReference type="Proteomes" id="UP000002300">
    <property type="component" value="Chromosome"/>
</dbReference>
<dbReference type="GO" id="GO:0005829">
    <property type="term" value="C:cytosol"/>
    <property type="evidence" value="ECO:0007669"/>
    <property type="project" value="TreeGrafter"/>
</dbReference>
<dbReference type="GO" id="GO:0002161">
    <property type="term" value="F:aminoacyl-tRNA deacylase activity"/>
    <property type="evidence" value="ECO:0007669"/>
    <property type="project" value="InterPro"/>
</dbReference>
<dbReference type="GO" id="GO:0005524">
    <property type="term" value="F:ATP binding"/>
    <property type="evidence" value="ECO:0007669"/>
    <property type="project" value="UniProtKB-UniRule"/>
</dbReference>
<dbReference type="GO" id="GO:0140096">
    <property type="term" value="F:catalytic activity, acting on a protein"/>
    <property type="evidence" value="ECO:0007669"/>
    <property type="project" value="UniProtKB-ARBA"/>
</dbReference>
<dbReference type="GO" id="GO:0004827">
    <property type="term" value="F:proline-tRNA ligase activity"/>
    <property type="evidence" value="ECO:0007669"/>
    <property type="project" value="UniProtKB-UniRule"/>
</dbReference>
<dbReference type="GO" id="GO:0016740">
    <property type="term" value="F:transferase activity"/>
    <property type="evidence" value="ECO:0007669"/>
    <property type="project" value="UniProtKB-ARBA"/>
</dbReference>
<dbReference type="GO" id="GO:0006433">
    <property type="term" value="P:prolyl-tRNA aminoacylation"/>
    <property type="evidence" value="ECO:0007669"/>
    <property type="project" value="UniProtKB-UniRule"/>
</dbReference>
<dbReference type="CDD" id="cd04334">
    <property type="entry name" value="ProRS-INS"/>
    <property type="match status" value="1"/>
</dbReference>
<dbReference type="CDD" id="cd00861">
    <property type="entry name" value="ProRS_anticodon_short"/>
    <property type="match status" value="1"/>
</dbReference>
<dbReference type="CDD" id="cd00779">
    <property type="entry name" value="ProRS_core_prok"/>
    <property type="match status" value="1"/>
</dbReference>
<dbReference type="FunFam" id="3.30.930.10:FF:000043">
    <property type="entry name" value="Proline--tRNA ligase"/>
    <property type="match status" value="1"/>
</dbReference>
<dbReference type="FunFam" id="3.30.930.10:FF:000088">
    <property type="entry name" value="Proline--tRNA ligase"/>
    <property type="match status" value="1"/>
</dbReference>
<dbReference type="FunFam" id="3.40.50.800:FF:000011">
    <property type="entry name" value="Proline--tRNA ligase"/>
    <property type="match status" value="1"/>
</dbReference>
<dbReference type="Gene3D" id="3.40.50.800">
    <property type="entry name" value="Anticodon-binding domain"/>
    <property type="match status" value="1"/>
</dbReference>
<dbReference type="Gene3D" id="3.30.930.10">
    <property type="entry name" value="Bira Bifunctional Protein, Domain 2"/>
    <property type="match status" value="2"/>
</dbReference>
<dbReference type="HAMAP" id="MF_01569">
    <property type="entry name" value="Pro_tRNA_synth_type1"/>
    <property type="match status" value="1"/>
</dbReference>
<dbReference type="InterPro" id="IPR002314">
    <property type="entry name" value="aa-tRNA-synt_IIb"/>
</dbReference>
<dbReference type="InterPro" id="IPR006195">
    <property type="entry name" value="aa-tRNA-synth_II"/>
</dbReference>
<dbReference type="InterPro" id="IPR045864">
    <property type="entry name" value="aa-tRNA-synth_II/BPL/LPL"/>
</dbReference>
<dbReference type="InterPro" id="IPR004154">
    <property type="entry name" value="Anticodon-bd"/>
</dbReference>
<dbReference type="InterPro" id="IPR036621">
    <property type="entry name" value="Anticodon-bd_dom_sf"/>
</dbReference>
<dbReference type="InterPro" id="IPR002316">
    <property type="entry name" value="Pro-tRNA-ligase_IIa"/>
</dbReference>
<dbReference type="InterPro" id="IPR004500">
    <property type="entry name" value="Pro-tRNA-synth_IIa_bac-type"/>
</dbReference>
<dbReference type="InterPro" id="IPR023717">
    <property type="entry name" value="Pro-tRNA-Synthase_IIa_type1"/>
</dbReference>
<dbReference type="InterPro" id="IPR050062">
    <property type="entry name" value="Pro-tRNA_synthetase"/>
</dbReference>
<dbReference type="InterPro" id="IPR044140">
    <property type="entry name" value="ProRS_anticodon_short"/>
</dbReference>
<dbReference type="InterPro" id="IPR033730">
    <property type="entry name" value="ProRS_core_prok"/>
</dbReference>
<dbReference type="InterPro" id="IPR036754">
    <property type="entry name" value="YbaK/aa-tRNA-synt-asso_dom_sf"/>
</dbReference>
<dbReference type="InterPro" id="IPR007214">
    <property type="entry name" value="YbaK/aa-tRNA-synth-assoc-dom"/>
</dbReference>
<dbReference type="NCBIfam" id="NF006625">
    <property type="entry name" value="PRK09194.1"/>
    <property type="match status" value="1"/>
</dbReference>
<dbReference type="NCBIfam" id="TIGR00409">
    <property type="entry name" value="proS_fam_II"/>
    <property type="match status" value="1"/>
</dbReference>
<dbReference type="PANTHER" id="PTHR42753">
    <property type="entry name" value="MITOCHONDRIAL RIBOSOME PROTEIN L39/PROLYL-TRNA LIGASE FAMILY MEMBER"/>
    <property type="match status" value="1"/>
</dbReference>
<dbReference type="PANTHER" id="PTHR42753:SF2">
    <property type="entry name" value="PROLINE--TRNA LIGASE"/>
    <property type="match status" value="1"/>
</dbReference>
<dbReference type="Pfam" id="PF03129">
    <property type="entry name" value="HGTP_anticodon"/>
    <property type="match status" value="1"/>
</dbReference>
<dbReference type="Pfam" id="PF00587">
    <property type="entry name" value="tRNA-synt_2b"/>
    <property type="match status" value="1"/>
</dbReference>
<dbReference type="Pfam" id="PF04073">
    <property type="entry name" value="tRNA_edit"/>
    <property type="match status" value="1"/>
</dbReference>
<dbReference type="PIRSF" id="PIRSF001535">
    <property type="entry name" value="ProRS_1"/>
    <property type="match status" value="1"/>
</dbReference>
<dbReference type="PRINTS" id="PR01046">
    <property type="entry name" value="TRNASYNTHPRO"/>
</dbReference>
<dbReference type="SUPFAM" id="SSF52954">
    <property type="entry name" value="Class II aaRS ABD-related"/>
    <property type="match status" value="1"/>
</dbReference>
<dbReference type="SUPFAM" id="SSF55681">
    <property type="entry name" value="Class II aaRS and biotin synthetases"/>
    <property type="match status" value="1"/>
</dbReference>
<dbReference type="SUPFAM" id="SSF55826">
    <property type="entry name" value="YbaK/ProRS associated domain"/>
    <property type="match status" value="1"/>
</dbReference>
<dbReference type="PROSITE" id="PS50862">
    <property type="entry name" value="AA_TRNA_LIGASE_II"/>
    <property type="match status" value="1"/>
</dbReference>
<gene>
    <name evidence="1" type="primary">proS</name>
    <name type="ordered locus">Bcer98_2471</name>
</gene>
<evidence type="ECO:0000255" key="1">
    <source>
        <dbReference type="HAMAP-Rule" id="MF_01569"/>
    </source>
</evidence>
<comment type="function">
    <text evidence="1">Catalyzes the attachment of proline to tRNA(Pro) in a two-step reaction: proline is first activated by ATP to form Pro-AMP and then transferred to the acceptor end of tRNA(Pro). As ProRS can inadvertently accommodate and process non-cognate amino acids such as alanine and cysteine, to avoid such errors it has two additional distinct editing activities against alanine. One activity is designated as 'pretransfer' editing and involves the tRNA(Pro)-independent hydrolysis of activated Ala-AMP. The other activity is designated 'posttransfer' editing and involves deacylation of mischarged Ala-tRNA(Pro). The misacylated Cys-tRNA(Pro) is not edited by ProRS.</text>
</comment>
<comment type="catalytic activity">
    <reaction evidence="1">
        <text>tRNA(Pro) + L-proline + ATP = L-prolyl-tRNA(Pro) + AMP + diphosphate</text>
        <dbReference type="Rhea" id="RHEA:14305"/>
        <dbReference type="Rhea" id="RHEA-COMP:9700"/>
        <dbReference type="Rhea" id="RHEA-COMP:9702"/>
        <dbReference type="ChEBI" id="CHEBI:30616"/>
        <dbReference type="ChEBI" id="CHEBI:33019"/>
        <dbReference type="ChEBI" id="CHEBI:60039"/>
        <dbReference type="ChEBI" id="CHEBI:78442"/>
        <dbReference type="ChEBI" id="CHEBI:78532"/>
        <dbReference type="ChEBI" id="CHEBI:456215"/>
        <dbReference type="EC" id="6.1.1.15"/>
    </reaction>
</comment>
<comment type="subunit">
    <text evidence="1">Homodimer.</text>
</comment>
<comment type="subcellular location">
    <subcellularLocation>
        <location evidence="1">Cytoplasm</location>
    </subcellularLocation>
</comment>
<comment type="domain">
    <text evidence="1">Consists of three domains: the N-terminal catalytic domain, the editing domain and the C-terminal anticodon-binding domain.</text>
</comment>
<comment type="similarity">
    <text evidence="1">Belongs to the class-II aminoacyl-tRNA synthetase family. ProS type 1 subfamily.</text>
</comment>
<reference key="1">
    <citation type="journal article" date="2008" name="Chem. Biol. Interact.">
        <title>Extending the Bacillus cereus group genomics to putative food-borne pathogens of different toxicity.</title>
        <authorList>
            <person name="Lapidus A."/>
            <person name="Goltsman E."/>
            <person name="Auger S."/>
            <person name="Galleron N."/>
            <person name="Segurens B."/>
            <person name="Dossat C."/>
            <person name="Land M.L."/>
            <person name="Broussolle V."/>
            <person name="Brillard J."/>
            <person name="Guinebretiere M.-H."/>
            <person name="Sanchis V."/>
            <person name="Nguen-the C."/>
            <person name="Lereclus D."/>
            <person name="Richardson P."/>
            <person name="Wincker P."/>
            <person name="Weissenbach J."/>
            <person name="Ehrlich S.D."/>
            <person name="Sorokin A."/>
        </authorList>
    </citation>
    <scope>NUCLEOTIDE SEQUENCE [LARGE SCALE GENOMIC DNA]</scope>
    <source>
        <strain>DSM 22905 / CIP 110041 / 391-98 / NVH 391-98</strain>
    </source>
</reference>
<name>SYP_BACCN</name>
<keyword id="KW-0030">Aminoacyl-tRNA synthetase</keyword>
<keyword id="KW-0067">ATP-binding</keyword>
<keyword id="KW-0963">Cytoplasm</keyword>
<keyword id="KW-0436">Ligase</keyword>
<keyword id="KW-0547">Nucleotide-binding</keyword>
<keyword id="KW-0648">Protein biosynthesis</keyword>
<protein>
    <recommendedName>
        <fullName evidence="1">Proline--tRNA ligase</fullName>
        <ecNumber evidence="1">6.1.1.15</ecNumber>
    </recommendedName>
    <alternativeName>
        <fullName evidence="1">Prolyl-tRNA synthetase</fullName>
        <shortName evidence="1">ProRS</shortName>
    </alternativeName>
</protein>
<accession>A7GRE9</accession>
<proteinExistence type="inferred from homology"/>
<organism>
    <name type="scientific">Bacillus cytotoxicus (strain DSM 22905 / CIP 110041 / 391-98 / NVH 391-98)</name>
    <dbReference type="NCBI Taxonomy" id="315749"/>
    <lineage>
        <taxon>Bacteria</taxon>
        <taxon>Bacillati</taxon>
        <taxon>Bacillota</taxon>
        <taxon>Bacilli</taxon>
        <taxon>Bacillales</taxon>
        <taxon>Bacillaceae</taxon>
        <taxon>Bacillus</taxon>
        <taxon>Bacillus cereus group</taxon>
    </lineage>
</organism>
<feature type="chain" id="PRO_1000087833" description="Proline--tRNA ligase">
    <location>
        <begin position="1"/>
        <end position="566"/>
    </location>
</feature>
<sequence length="566" mass="63245">MKQSMVFSPTLREVPADAEIKSHQLLLRAGFMRQNASGIYSFLPLGLKVLHKVEHIIREEMERAGAVELLMPALQAAELWQESGRWYSYGSELMRMKDRNDREFALGATHEEVITDLVRDEIKSYKKLPLTLYQIQTKFRDEQRPRFGLLRGREFLMKDAYSFHATQESLDEVYDRLFQAYSNIFARCGLNFRAVIADSGAMGGKDTHEFMVLSDVGEDTIAYSDTSDYAANIEMAPVVATYTKSDEAEKALEKVATPDQKAIEEVSAFLNIEPSQCIKTMVFKVDEKFVVVLVRGDHEVNDVKVKNVYGASVVELASYEEVRSLLNCEVGSLGPIGIAEDVEVIADHAVAAIVNGCCGANEEGFHYVNVNSERDFKVNQYADLRFIQEGDQSPDGKGTIRFARGIEVGHVFKLGTRYSEAMNATFLDENGKTKPLIMGCYGIGVSRTVAAIAEQFNDENGLVWPKAVAPFHVHVIPVNMKSDVQREVAENIYTSLQEQGYEVLLDDRTERAGVKFADADLFGLPVRVTVGKKADEGIVEVKVRATNESAEVKVEDLHTYIADILK</sequence>